<protein>
    <recommendedName>
        <fullName evidence="1">Glutamyl-tRNA(Gln) amidotransferase subunit A</fullName>
        <shortName evidence="1">Glu-ADT subunit A</shortName>
        <ecNumber evidence="1">6.3.5.7</ecNumber>
    </recommendedName>
</protein>
<organism>
    <name type="scientific">Staphylococcus carnosus (strain TM300)</name>
    <dbReference type="NCBI Taxonomy" id="396513"/>
    <lineage>
        <taxon>Bacteria</taxon>
        <taxon>Bacillati</taxon>
        <taxon>Bacillota</taxon>
        <taxon>Bacilli</taxon>
        <taxon>Bacillales</taxon>
        <taxon>Staphylococcaceae</taxon>
        <taxon>Staphylococcus</taxon>
    </lineage>
</organism>
<name>GATA_STACT</name>
<feature type="chain" id="PRO_1000122489" description="Glutamyl-tRNA(Gln) amidotransferase subunit A">
    <location>
        <begin position="1"/>
        <end position="485"/>
    </location>
</feature>
<feature type="active site" description="Charge relay system" evidence="1">
    <location>
        <position position="79"/>
    </location>
</feature>
<feature type="active site" description="Charge relay system" evidence="1">
    <location>
        <position position="154"/>
    </location>
</feature>
<feature type="active site" description="Acyl-ester intermediate" evidence="1">
    <location>
        <position position="178"/>
    </location>
</feature>
<proteinExistence type="inferred from homology"/>
<accession>B9DMT8</accession>
<comment type="function">
    <text evidence="1">Allows the formation of correctly charged Gln-tRNA(Gln) through the transamidation of misacylated Glu-tRNA(Gln) in organisms which lack glutaminyl-tRNA synthetase. The reaction takes place in the presence of glutamine and ATP through an activated gamma-phospho-Glu-tRNA(Gln).</text>
</comment>
<comment type="catalytic activity">
    <reaction evidence="1">
        <text>L-glutamyl-tRNA(Gln) + L-glutamine + ATP + H2O = L-glutaminyl-tRNA(Gln) + L-glutamate + ADP + phosphate + H(+)</text>
        <dbReference type="Rhea" id="RHEA:17521"/>
        <dbReference type="Rhea" id="RHEA-COMP:9681"/>
        <dbReference type="Rhea" id="RHEA-COMP:9684"/>
        <dbReference type="ChEBI" id="CHEBI:15377"/>
        <dbReference type="ChEBI" id="CHEBI:15378"/>
        <dbReference type="ChEBI" id="CHEBI:29985"/>
        <dbReference type="ChEBI" id="CHEBI:30616"/>
        <dbReference type="ChEBI" id="CHEBI:43474"/>
        <dbReference type="ChEBI" id="CHEBI:58359"/>
        <dbReference type="ChEBI" id="CHEBI:78520"/>
        <dbReference type="ChEBI" id="CHEBI:78521"/>
        <dbReference type="ChEBI" id="CHEBI:456216"/>
        <dbReference type="EC" id="6.3.5.7"/>
    </reaction>
</comment>
<comment type="subunit">
    <text evidence="1">Heterotrimer of A, B and C subunits.</text>
</comment>
<comment type="similarity">
    <text evidence="1">Belongs to the amidase family. GatA subfamily.</text>
</comment>
<reference key="1">
    <citation type="journal article" date="2009" name="Appl. Environ. Microbiol.">
        <title>Genome analysis of the meat starter culture bacterium Staphylococcus carnosus TM300.</title>
        <authorList>
            <person name="Rosenstein R."/>
            <person name="Nerz C."/>
            <person name="Biswas L."/>
            <person name="Resch A."/>
            <person name="Raddatz G."/>
            <person name="Schuster S.C."/>
            <person name="Goetz F."/>
        </authorList>
    </citation>
    <scope>NUCLEOTIDE SEQUENCE [LARGE SCALE GENOMIC DNA]</scope>
    <source>
        <strain>TM300</strain>
    </source>
</reference>
<evidence type="ECO:0000255" key="1">
    <source>
        <dbReference type="HAMAP-Rule" id="MF_00120"/>
    </source>
</evidence>
<dbReference type="EC" id="6.3.5.7" evidence="1"/>
<dbReference type="EMBL" id="AM295250">
    <property type="protein sequence ID" value="CAL28377.1"/>
    <property type="molecule type" value="Genomic_DNA"/>
</dbReference>
<dbReference type="RefSeq" id="WP_015900717.1">
    <property type="nucleotide sequence ID" value="NC_012121.1"/>
</dbReference>
<dbReference type="SMR" id="B9DMT8"/>
<dbReference type="GeneID" id="93793927"/>
<dbReference type="KEGG" id="sca:SCA_1472"/>
<dbReference type="eggNOG" id="COG0154">
    <property type="taxonomic scope" value="Bacteria"/>
</dbReference>
<dbReference type="HOGENOM" id="CLU_009600_0_3_9"/>
<dbReference type="OrthoDB" id="9811471at2"/>
<dbReference type="BioCyc" id="SCAR396513:SCA_RS07485-MONOMER"/>
<dbReference type="Proteomes" id="UP000000444">
    <property type="component" value="Chromosome"/>
</dbReference>
<dbReference type="GO" id="GO:0030956">
    <property type="term" value="C:glutamyl-tRNA(Gln) amidotransferase complex"/>
    <property type="evidence" value="ECO:0007669"/>
    <property type="project" value="InterPro"/>
</dbReference>
<dbReference type="GO" id="GO:0005524">
    <property type="term" value="F:ATP binding"/>
    <property type="evidence" value="ECO:0007669"/>
    <property type="project" value="UniProtKB-KW"/>
</dbReference>
<dbReference type="GO" id="GO:0050567">
    <property type="term" value="F:glutaminyl-tRNA synthase (glutamine-hydrolyzing) activity"/>
    <property type="evidence" value="ECO:0007669"/>
    <property type="project" value="UniProtKB-UniRule"/>
</dbReference>
<dbReference type="GO" id="GO:0006412">
    <property type="term" value="P:translation"/>
    <property type="evidence" value="ECO:0007669"/>
    <property type="project" value="UniProtKB-UniRule"/>
</dbReference>
<dbReference type="Gene3D" id="3.90.1300.10">
    <property type="entry name" value="Amidase signature (AS) domain"/>
    <property type="match status" value="1"/>
</dbReference>
<dbReference type="HAMAP" id="MF_00120">
    <property type="entry name" value="GatA"/>
    <property type="match status" value="1"/>
</dbReference>
<dbReference type="InterPro" id="IPR000120">
    <property type="entry name" value="Amidase"/>
</dbReference>
<dbReference type="InterPro" id="IPR020556">
    <property type="entry name" value="Amidase_CS"/>
</dbReference>
<dbReference type="InterPro" id="IPR023631">
    <property type="entry name" value="Amidase_dom"/>
</dbReference>
<dbReference type="InterPro" id="IPR036928">
    <property type="entry name" value="AS_sf"/>
</dbReference>
<dbReference type="InterPro" id="IPR004412">
    <property type="entry name" value="GatA"/>
</dbReference>
<dbReference type="NCBIfam" id="TIGR00132">
    <property type="entry name" value="gatA"/>
    <property type="match status" value="1"/>
</dbReference>
<dbReference type="PANTHER" id="PTHR11895:SF151">
    <property type="entry name" value="GLUTAMYL-TRNA(GLN) AMIDOTRANSFERASE SUBUNIT A"/>
    <property type="match status" value="1"/>
</dbReference>
<dbReference type="PANTHER" id="PTHR11895">
    <property type="entry name" value="TRANSAMIDASE"/>
    <property type="match status" value="1"/>
</dbReference>
<dbReference type="Pfam" id="PF01425">
    <property type="entry name" value="Amidase"/>
    <property type="match status" value="1"/>
</dbReference>
<dbReference type="SUPFAM" id="SSF75304">
    <property type="entry name" value="Amidase signature (AS) enzymes"/>
    <property type="match status" value="1"/>
</dbReference>
<dbReference type="PROSITE" id="PS00571">
    <property type="entry name" value="AMIDASES"/>
    <property type="match status" value="1"/>
</dbReference>
<sequence length="485" mass="53248">MSIRYESVEKLSEMIKNKEIKPSEVVKDIYDAIEETDPTIKSFLALDKENAMKKAEELDELQAKDQMEGKLFGIPMGIKDNIITEGLETTCASKMLEGFVPIYESTVMNKLHDENAVLIGKLNMDEFAMGGSTETSYYKKTVNPFDHTAVPGGSSGGSAAAVAAGLVPFSLGSDTGGSIRQPAAYCGIVGMKPTYGRVSRFGLVAFASSLDQIGPLTRNVKDNAIVLETIVGEDKHDSTSAPVADNDFTSDIGKDIRGMKIALPKEYLGEGVNDEVKEAVRNAVEILEGEGAIVEEVSLPNTGYGIPSYYVIASSEASSNLSRFDGIRYGFHSKEANTLDELYKLSRSEGFGKEVKRRILLGTFALSSGYYDAYYKKSQKVRTLIRQDFERVFEDYDVVVGPTTPTPAFNLGEEINDPLTMYANDLLTTPVNLAGLPGISIPCGQTNDRPIGLQFIGKPFDEKTLYRVAYQFEQQYNLHDQYQNL</sequence>
<gene>
    <name evidence="1" type="primary">gatA</name>
    <name type="ordered locus">Sca_1472</name>
</gene>
<keyword id="KW-0067">ATP-binding</keyword>
<keyword id="KW-0436">Ligase</keyword>
<keyword id="KW-0547">Nucleotide-binding</keyword>
<keyword id="KW-0648">Protein biosynthesis</keyword>
<keyword id="KW-1185">Reference proteome</keyword>